<sequence>MHILVVSVNYRTAPVEFREKLTFQAAELEQAMNTLQNQKSVLENVIVSTCNRTEIYAVVDQLHTGRYYIKKFLADWFQLEIEEVAPYLSIFEQDGAIDHLFRVTCGLDSMVVGETQILGQIKDSFLEAQQVKATGTIFNELFKQVVTLAKRAHSETTIGESAMSVSYAAVELGKKIFGDLTDCHVLILGAGKMGELALQNLYGSGARKVTVMNRTLTKAEVMAEKYMGHAKPLSELQCALLEADILISSTGASEYVITKEMMTKVERMRSGRPLFMVDIAVPRDIDPAIDELEGSFLYDIDDLQGVVEANRAERLKEAEKIQFMIEEEMVLFKTWLSTLGVVPLISALRDKALAIQSDTMESLERKIPNLSDREKKVISKHTKSIINQLLKDPILVAKELAVEEGAGEKLALFAKIFDLEVEEAGNTEEVEHKRAWTPSVPSL</sequence>
<feature type="chain" id="PRO_1000093114" description="Glutamyl-tRNA reductase">
    <location>
        <begin position="1"/>
        <end position="443"/>
    </location>
</feature>
<feature type="active site" description="Nucleophile" evidence="1">
    <location>
        <position position="50"/>
    </location>
</feature>
<feature type="binding site" evidence="1">
    <location>
        <begin position="49"/>
        <end position="52"/>
    </location>
    <ligand>
        <name>substrate</name>
    </ligand>
</feature>
<feature type="binding site" evidence="1">
    <location>
        <position position="109"/>
    </location>
    <ligand>
        <name>substrate</name>
    </ligand>
</feature>
<feature type="binding site" evidence="1">
    <location>
        <begin position="114"/>
        <end position="116"/>
    </location>
    <ligand>
        <name>substrate</name>
    </ligand>
</feature>
<feature type="binding site" evidence="1">
    <location>
        <position position="120"/>
    </location>
    <ligand>
        <name>substrate</name>
    </ligand>
</feature>
<feature type="binding site" evidence="1">
    <location>
        <begin position="189"/>
        <end position="194"/>
    </location>
    <ligand>
        <name>NADP(+)</name>
        <dbReference type="ChEBI" id="CHEBI:58349"/>
    </ligand>
</feature>
<feature type="site" description="Important for activity" evidence="1">
    <location>
        <position position="99"/>
    </location>
</feature>
<proteinExistence type="inferred from homology"/>
<reference key="1">
    <citation type="journal article" date="2008" name="Chem. Biol. Interact.">
        <title>Extending the Bacillus cereus group genomics to putative food-borne pathogens of different toxicity.</title>
        <authorList>
            <person name="Lapidus A."/>
            <person name="Goltsman E."/>
            <person name="Auger S."/>
            <person name="Galleron N."/>
            <person name="Segurens B."/>
            <person name="Dossat C."/>
            <person name="Land M.L."/>
            <person name="Broussolle V."/>
            <person name="Brillard J."/>
            <person name="Guinebretiere M.-H."/>
            <person name="Sanchis V."/>
            <person name="Nguen-the C."/>
            <person name="Lereclus D."/>
            <person name="Richardson P."/>
            <person name="Wincker P."/>
            <person name="Weissenbach J."/>
            <person name="Ehrlich S.D."/>
            <person name="Sorokin A."/>
        </authorList>
    </citation>
    <scope>NUCLEOTIDE SEQUENCE [LARGE SCALE GENOMIC DNA]</scope>
    <source>
        <strain>KBAB4</strain>
    </source>
</reference>
<protein>
    <recommendedName>
        <fullName evidence="1">Glutamyl-tRNA reductase</fullName>
        <shortName evidence="1">GluTR</shortName>
        <ecNumber evidence="1">1.2.1.70</ecNumber>
    </recommendedName>
</protein>
<name>HEM1_BACMK</name>
<accession>A9VIU0</accession>
<gene>
    <name evidence="1" type="primary">hemA</name>
    <name type="ordered locus">BcerKBAB4_4311</name>
</gene>
<dbReference type="EC" id="1.2.1.70" evidence="1"/>
<dbReference type="EMBL" id="CP000903">
    <property type="protein sequence ID" value="ABY45470.1"/>
    <property type="molecule type" value="Genomic_DNA"/>
</dbReference>
<dbReference type="RefSeq" id="WP_002143275.1">
    <property type="nucleotide sequence ID" value="NC_010184.1"/>
</dbReference>
<dbReference type="SMR" id="A9VIU0"/>
<dbReference type="GeneID" id="66265967"/>
<dbReference type="KEGG" id="bwe:BcerKBAB4_4311"/>
<dbReference type="eggNOG" id="COG0373">
    <property type="taxonomic scope" value="Bacteria"/>
</dbReference>
<dbReference type="HOGENOM" id="CLU_035113_2_2_9"/>
<dbReference type="UniPathway" id="UPA00251">
    <property type="reaction ID" value="UER00316"/>
</dbReference>
<dbReference type="Proteomes" id="UP000002154">
    <property type="component" value="Chromosome"/>
</dbReference>
<dbReference type="GO" id="GO:0008883">
    <property type="term" value="F:glutamyl-tRNA reductase activity"/>
    <property type="evidence" value="ECO:0007669"/>
    <property type="project" value="UniProtKB-UniRule"/>
</dbReference>
<dbReference type="GO" id="GO:0050661">
    <property type="term" value="F:NADP binding"/>
    <property type="evidence" value="ECO:0007669"/>
    <property type="project" value="InterPro"/>
</dbReference>
<dbReference type="GO" id="GO:0006782">
    <property type="term" value="P:protoporphyrinogen IX biosynthetic process"/>
    <property type="evidence" value="ECO:0007669"/>
    <property type="project" value="UniProtKB-UniRule"/>
</dbReference>
<dbReference type="CDD" id="cd05213">
    <property type="entry name" value="NAD_bind_Glutamyl_tRNA_reduct"/>
    <property type="match status" value="1"/>
</dbReference>
<dbReference type="FunFam" id="3.30.460.30:FF:000001">
    <property type="entry name" value="Glutamyl-tRNA reductase"/>
    <property type="match status" value="1"/>
</dbReference>
<dbReference type="FunFam" id="3.40.50.720:FF:000031">
    <property type="entry name" value="Glutamyl-tRNA reductase"/>
    <property type="match status" value="1"/>
</dbReference>
<dbReference type="Gene3D" id="3.30.460.30">
    <property type="entry name" value="Glutamyl-tRNA reductase, N-terminal domain"/>
    <property type="match status" value="1"/>
</dbReference>
<dbReference type="Gene3D" id="3.40.50.720">
    <property type="entry name" value="NAD(P)-binding Rossmann-like Domain"/>
    <property type="match status" value="1"/>
</dbReference>
<dbReference type="HAMAP" id="MF_00087">
    <property type="entry name" value="Glu_tRNA_reductase"/>
    <property type="match status" value="1"/>
</dbReference>
<dbReference type="InterPro" id="IPR000343">
    <property type="entry name" value="4pyrrol_synth_GluRdtase"/>
</dbReference>
<dbReference type="InterPro" id="IPR015896">
    <property type="entry name" value="4pyrrol_synth_GluRdtase_dimer"/>
</dbReference>
<dbReference type="InterPro" id="IPR015895">
    <property type="entry name" value="4pyrrol_synth_GluRdtase_N"/>
</dbReference>
<dbReference type="InterPro" id="IPR018214">
    <property type="entry name" value="GluRdtase_CS"/>
</dbReference>
<dbReference type="InterPro" id="IPR036453">
    <property type="entry name" value="GluRdtase_dimer_dom_sf"/>
</dbReference>
<dbReference type="InterPro" id="IPR036343">
    <property type="entry name" value="GluRdtase_N_sf"/>
</dbReference>
<dbReference type="InterPro" id="IPR036291">
    <property type="entry name" value="NAD(P)-bd_dom_sf"/>
</dbReference>
<dbReference type="InterPro" id="IPR006151">
    <property type="entry name" value="Shikm_DH/Glu-tRNA_Rdtase"/>
</dbReference>
<dbReference type="NCBIfam" id="TIGR01035">
    <property type="entry name" value="hemA"/>
    <property type="match status" value="1"/>
</dbReference>
<dbReference type="PANTHER" id="PTHR43120">
    <property type="entry name" value="GLUTAMYL-TRNA REDUCTASE 1, CHLOROPLASTIC"/>
    <property type="match status" value="1"/>
</dbReference>
<dbReference type="PANTHER" id="PTHR43120:SF1">
    <property type="entry name" value="GLUTAMYL-TRNA REDUCTASE 1, CHLOROPLASTIC"/>
    <property type="match status" value="1"/>
</dbReference>
<dbReference type="Pfam" id="PF00745">
    <property type="entry name" value="GlutR_dimer"/>
    <property type="match status" value="1"/>
</dbReference>
<dbReference type="Pfam" id="PF05201">
    <property type="entry name" value="GlutR_N"/>
    <property type="match status" value="1"/>
</dbReference>
<dbReference type="Pfam" id="PF01488">
    <property type="entry name" value="Shikimate_DH"/>
    <property type="match status" value="1"/>
</dbReference>
<dbReference type="PIRSF" id="PIRSF000445">
    <property type="entry name" value="4pyrrol_synth_GluRdtase"/>
    <property type="match status" value="1"/>
</dbReference>
<dbReference type="SUPFAM" id="SSF69742">
    <property type="entry name" value="Glutamyl tRNA-reductase catalytic, N-terminal domain"/>
    <property type="match status" value="1"/>
</dbReference>
<dbReference type="SUPFAM" id="SSF69075">
    <property type="entry name" value="Glutamyl tRNA-reductase dimerization domain"/>
    <property type="match status" value="1"/>
</dbReference>
<dbReference type="SUPFAM" id="SSF51735">
    <property type="entry name" value="NAD(P)-binding Rossmann-fold domains"/>
    <property type="match status" value="1"/>
</dbReference>
<dbReference type="PROSITE" id="PS00747">
    <property type="entry name" value="GLUTR"/>
    <property type="match status" value="1"/>
</dbReference>
<organism>
    <name type="scientific">Bacillus mycoides (strain KBAB4)</name>
    <name type="common">Bacillus weihenstephanensis</name>
    <dbReference type="NCBI Taxonomy" id="315730"/>
    <lineage>
        <taxon>Bacteria</taxon>
        <taxon>Bacillati</taxon>
        <taxon>Bacillota</taxon>
        <taxon>Bacilli</taxon>
        <taxon>Bacillales</taxon>
        <taxon>Bacillaceae</taxon>
        <taxon>Bacillus</taxon>
        <taxon>Bacillus cereus group</taxon>
    </lineage>
</organism>
<keyword id="KW-0521">NADP</keyword>
<keyword id="KW-0560">Oxidoreductase</keyword>
<keyword id="KW-0627">Porphyrin biosynthesis</keyword>
<comment type="function">
    <text evidence="1">Catalyzes the NADPH-dependent reduction of glutamyl-tRNA(Glu) to glutamate 1-semialdehyde (GSA).</text>
</comment>
<comment type="catalytic activity">
    <reaction evidence="1">
        <text>(S)-4-amino-5-oxopentanoate + tRNA(Glu) + NADP(+) = L-glutamyl-tRNA(Glu) + NADPH + H(+)</text>
        <dbReference type="Rhea" id="RHEA:12344"/>
        <dbReference type="Rhea" id="RHEA-COMP:9663"/>
        <dbReference type="Rhea" id="RHEA-COMP:9680"/>
        <dbReference type="ChEBI" id="CHEBI:15378"/>
        <dbReference type="ChEBI" id="CHEBI:57501"/>
        <dbReference type="ChEBI" id="CHEBI:57783"/>
        <dbReference type="ChEBI" id="CHEBI:58349"/>
        <dbReference type="ChEBI" id="CHEBI:78442"/>
        <dbReference type="ChEBI" id="CHEBI:78520"/>
        <dbReference type="EC" id="1.2.1.70"/>
    </reaction>
</comment>
<comment type="pathway">
    <text evidence="1">Porphyrin-containing compound metabolism; protoporphyrin-IX biosynthesis; 5-aminolevulinate from L-glutamyl-tRNA(Glu): step 1/2.</text>
</comment>
<comment type="subunit">
    <text evidence="1">Homodimer.</text>
</comment>
<comment type="domain">
    <text evidence="1">Possesses an unusual extended V-shaped dimeric structure with each monomer consisting of three distinct domains arranged along a curved 'spinal' alpha-helix. The N-terminal catalytic domain specifically recognizes the glutamate moiety of the substrate. The second domain is the NADPH-binding domain, and the third C-terminal domain is responsible for dimerization.</text>
</comment>
<comment type="miscellaneous">
    <text evidence="1">During catalysis, the active site Cys acts as a nucleophile attacking the alpha-carbonyl group of tRNA-bound glutamate with the formation of a thioester intermediate between enzyme and glutamate, and the concomitant release of tRNA(Glu). The thioester intermediate is finally reduced by direct hydride transfer from NADPH, to form the product GSA.</text>
</comment>
<comment type="similarity">
    <text evidence="1">Belongs to the glutamyl-tRNA reductase family.</text>
</comment>
<evidence type="ECO:0000255" key="1">
    <source>
        <dbReference type="HAMAP-Rule" id="MF_00087"/>
    </source>
</evidence>